<sequence>MMDKIIQTLTLTFTFLYYSIPMLIVGLFISQILIESNIIKKIYFIGKIFTRLANLPEECGIAITTSFIEPRMANIMLVDFYKKGIINKKELYISSLIDAFPAMLRHWDSLLPILLATLGFFGIIYFIILVLIGFIQTLIFMAIGKITLKNREYKEDNTDKKIKLNKDVVYTAFKNTIKYGIPIIRDITIASIITSFLIEFGFFDYITEIIKNKAYYLPLSVEEITVAVTQPINYIGAFVLAGEFLNRGILDEIEVVRALLLGSILSSIPALRFLAPYYIGIYGFKDGFNLMMISTLVRILITALFVIITLIL</sequence>
<dbReference type="EMBL" id="L77117">
    <property type="protein sequence ID" value="AAB99576.1"/>
    <property type="molecule type" value="Genomic_DNA"/>
</dbReference>
<dbReference type="PIR" id="C64494">
    <property type="entry name" value="C64494"/>
</dbReference>
<dbReference type="STRING" id="243232.MJ_1556"/>
<dbReference type="PaxDb" id="243232-MJ_1556"/>
<dbReference type="DNASU" id="1452464"/>
<dbReference type="EnsemblBacteria" id="AAB99576">
    <property type="protein sequence ID" value="AAB99576"/>
    <property type="gene ID" value="MJ_1556"/>
</dbReference>
<dbReference type="KEGG" id="mja:MJ_1556"/>
<dbReference type="eggNOG" id="arCOG00360">
    <property type="taxonomic scope" value="Archaea"/>
</dbReference>
<dbReference type="HOGENOM" id="CLU_048086_2_1_2"/>
<dbReference type="InParanoid" id="Q58951"/>
<dbReference type="OrthoDB" id="51620at2157"/>
<dbReference type="PhylomeDB" id="Q58951"/>
<dbReference type="Proteomes" id="UP000000805">
    <property type="component" value="Chromosome"/>
</dbReference>
<dbReference type="GO" id="GO:0005886">
    <property type="term" value="C:plasma membrane"/>
    <property type="evidence" value="ECO:0007669"/>
    <property type="project" value="UniProtKB-SubCell"/>
</dbReference>
<dbReference type="InterPro" id="IPR038880">
    <property type="entry name" value="MJ0871-like"/>
</dbReference>
<dbReference type="PANTHER" id="PTHR38139">
    <property type="entry name" value="GATE DOMAIN-CONTAINING PROTEIN"/>
    <property type="match status" value="1"/>
</dbReference>
<dbReference type="PANTHER" id="PTHR38139:SF1">
    <property type="entry name" value="NUCLEOSIDE TRANSPORTER_FEOB GTPASE GATE DOMAIN-CONTAINING PROTEIN"/>
    <property type="match status" value="1"/>
</dbReference>
<protein>
    <recommendedName>
        <fullName>Uncharacterized protein MJ1556</fullName>
    </recommendedName>
</protein>
<reference key="1">
    <citation type="journal article" date="1996" name="Science">
        <title>Complete genome sequence of the methanogenic archaeon, Methanococcus jannaschii.</title>
        <authorList>
            <person name="Bult C.J."/>
            <person name="White O."/>
            <person name="Olsen G.J."/>
            <person name="Zhou L."/>
            <person name="Fleischmann R.D."/>
            <person name="Sutton G.G."/>
            <person name="Blake J.A."/>
            <person name="FitzGerald L.M."/>
            <person name="Clayton R.A."/>
            <person name="Gocayne J.D."/>
            <person name="Kerlavage A.R."/>
            <person name="Dougherty B.A."/>
            <person name="Tomb J.-F."/>
            <person name="Adams M.D."/>
            <person name="Reich C.I."/>
            <person name="Overbeek R."/>
            <person name="Kirkness E.F."/>
            <person name="Weinstock K.G."/>
            <person name="Merrick J.M."/>
            <person name="Glodek A."/>
            <person name="Scott J.L."/>
            <person name="Geoghagen N.S.M."/>
            <person name="Weidman J.F."/>
            <person name="Fuhrmann J.L."/>
            <person name="Nguyen D."/>
            <person name="Utterback T.R."/>
            <person name="Kelley J.M."/>
            <person name="Peterson J.D."/>
            <person name="Sadow P.W."/>
            <person name="Hanna M.C."/>
            <person name="Cotton M.D."/>
            <person name="Roberts K.M."/>
            <person name="Hurst M.A."/>
            <person name="Kaine B.P."/>
            <person name="Borodovsky M."/>
            <person name="Klenk H.-P."/>
            <person name="Fraser C.M."/>
            <person name="Smith H.O."/>
            <person name="Woese C.R."/>
            <person name="Venter J.C."/>
        </authorList>
    </citation>
    <scope>NUCLEOTIDE SEQUENCE [LARGE SCALE GENOMIC DNA]</scope>
    <source>
        <strain>ATCC 43067 / DSM 2661 / JAL-1 / JCM 10045 / NBRC 100440</strain>
    </source>
</reference>
<reference key="2">
    <citation type="submission" date="1998-02" db="EMBL/GenBank/DDBJ databases">
        <authorList>
            <person name="Bult C.J."/>
            <person name="White O."/>
            <person name="Olsen G.J."/>
            <person name="Zhou L."/>
            <person name="Fleischmann R.D."/>
            <person name="Sutton G.G."/>
            <person name="Blake J.A."/>
            <person name="FitzGerald L.M."/>
            <person name="Clayton R.A."/>
            <person name="Gocayne J.D."/>
            <person name="Kerlavage A.R."/>
            <person name="Dougherty B.A."/>
            <person name="Tomb J.-F."/>
            <person name="Adams M.D."/>
            <person name="Reich C.I."/>
            <person name="Overbeek R."/>
            <person name="Kirkness E.F."/>
            <person name="Weinstock K.G."/>
            <person name="Merrick J.M."/>
            <person name="Glodek A."/>
            <person name="Scott J.L."/>
            <person name="Geoghagen N.S.M."/>
            <person name="Weidman J.F."/>
            <person name="Fuhrmann J.L."/>
            <person name="Nguyen D."/>
            <person name="Utterback T.R."/>
            <person name="Kelley J.M."/>
            <person name="Peterson J.D."/>
            <person name="Sadow P.W."/>
            <person name="Hanna M.C."/>
            <person name="Cotton M.D."/>
            <person name="Roberts K.M."/>
            <person name="Hurst M.A."/>
            <person name="Kaine B.P."/>
            <person name="Borodovsky M."/>
            <person name="Klenk H.-P."/>
            <person name="Fraser C.M."/>
            <person name="Smith H.O."/>
            <person name="Woese C.R."/>
            <person name="Venter J.C."/>
        </authorList>
    </citation>
    <scope>SEQUENCE REVISION</scope>
</reference>
<keyword id="KW-1003">Cell membrane</keyword>
<keyword id="KW-0472">Membrane</keyword>
<keyword id="KW-1185">Reference proteome</keyword>
<keyword id="KW-0812">Transmembrane</keyword>
<keyword id="KW-1133">Transmembrane helix</keyword>
<feature type="chain" id="PRO_0000107410" description="Uncharacterized protein MJ1556">
    <location>
        <begin position="1"/>
        <end position="312"/>
    </location>
</feature>
<feature type="transmembrane region" description="Helical" evidence="1">
    <location>
        <begin position="9"/>
        <end position="29"/>
    </location>
</feature>
<feature type="transmembrane region" description="Helical" evidence="1">
    <location>
        <begin position="115"/>
        <end position="135"/>
    </location>
</feature>
<feature type="transmembrane region" description="Helical" evidence="1">
    <location>
        <begin position="187"/>
        <end position="207"/>
    </location>
</feature>
<feature type="transmembrane region" description="Helical" evidence="1">
    <location>
        <begin position="224"/>
        <end position="244"/>
    </location>
</feature>
<feature type="transmembrane region" description="Helical" evidence="1">
    <location>
        <begin position="264"/>
        <end position="284"/>
    </location>
</feature>
<feature type="transmembrane region" description="Helical" evidence="1">
    <location>
        <begin position="292"/>
        <end position="312"/>
    </location>
</feature>
<name>Y1556_METJA</name>
<accession>Q58951</accession>
<organism>
    <name type="scientific">Methanocaldococcus jannaschii (strain ATCC 43067 / DSM 2661 / JAL-1 / JCM 10045 / NBRC 100440)</name>
    <name type="common">Methanococcus jannaschii</name>
    <dbReference type="NCBI Taxonomy" id="243232"/>
    <lineage>
        <taxon>Archaea</taxon>
        <taxon>Methanobacteriati</taxon>
        <taxon>Methanobacteriota</taxon>
        <taxon>Methanomada group</taxon>
        <taxon>Methanococci</taxon>
        <taxon>Methanococcales</taxon>
        <taxon>Methanocaldococcaceae</taxon>
        <taxon>Methanocaldococcus</taxon>
    </lineage>
</organism>
<gene>
    <name type="ordered locus">MJ1556</name>
</gene>
<proteinExistence type="predicted"/>
<comment type="subcellular location">
    <subcellularLocation>
        <location evidence="2">Cell membrane</location>
        <topology evidence="2">Multi-pass membrane protein</topology>
    </subcellularLocation>
</comment>
<evidence type="ECO:0000255" key="1"/>
<evidence type="ECO:0000305" key="2"/>